<evidence type="ECO:0000255" key="1">
    <source>
        <dbReference type="HAMAP-Rule" id="MF_01328"/>
    </source>
</evidence>
<evidence type="ECO:0000256" key="2">
    <source>
        <dbReference type="SAM" id="MobiDB-lite"/>
    </source>
</evidence>
<evidence type="ECO:0000305" key="3"/>
<feature type="chain" id="PRO_1000166001" description="Large ribosomal subunit protein uL4">
    <location>
        <begin position="1"/>
        <end position="210"/>
    </location>
</feature>
<feature type="region of interest" description="Disordered" evidence="2">
    <location>
        <begin position="57"/>
        <end position="78"/>
    </location>
</feature>
<accession>B8IYH3</accession>
<gene>
    <name evidence="1" type="primary">rplD</name>
    <name type="ordered locus">Ddes_0661</name>
</gene>
<reference key="1">
    <citation type="submission" date="2009-01" db="EMBL/GenBank/DDBJ databases">
        <title>Complete sequence of Desulfovibrio desulfuricans subsp. desulfuricans str. ATCC 27774.</title>
        <authorList>
            <consortium name="US DOE Joint Genome Institute"/>
            <person name="Lucas S."/>
            <person name="Copeland A."/>
            <person name="Lapidus A."/>
            <person name="Glavina del Rio T."/>
            <person name="Tice H."/>
            <person name="Bruce D."/>
            <person name="Goodwin L."/>
            <person name="Pitluck S."/>
            <person name="Sims D."/>
            <person name="Lu M."/>
            <person name="Kiss H."/>
            <person name="Meineke L."/>
            <person name="Brettin T."/>
            <person name="Detter J.C."/>
            <person name="Han C."/>
            <person name="Larimer F."/>
            <person name="Land M."/>
            <person name="Hauser L."/>
            <person name="Kyrpides N."/>
            <person name="Ovchinnikova G."/>
            <person name="Hazen T.C."/>
        </authorList>
    </citation>
    <scope>NUCLEOTIDE SEQUENCE [LARGE SCALE GENOMIC DNA]</scope>
    <source>
        <strain>ATCC 27774 / DSM 6949 / MB</strain>
    </source>
</reference>
<protein>
    <recommendedName>
        <fullName evidence="1">Large ribosomal subunit protein uL4</fullName>
    </recommendedName>
    <alternativeName>
        <fullName evidence="3">50S ribosomal protein L4</fullName>
    </alternativeName>
</protein>
<sequence length="210" mass="22687">MATVKVYDQNKQESGEVTLASDVFEIEVRPEILNLVARAQMAAKRAGTHNVKTRAFVSGGGAKPWKQKGTGRARAGSNRSPIWRGGAITFGPSPRDYTFKVNSKVRSLALKMALSSRLAAESLMVVKGIVLPEAKTKHFAKVADTLGLTKALIVAPEENADLTRSARNIPGLTLTTVDRLSVLEILKHKQLVLLEGAVESVQARFEKKGA</sequence>
<proteinExistence type="inferred from homology"/>
<keyword id="KW-0687">Ribonucleoprotein</keyword>
<keyword id="KW-0689">Ribosomal protein</keyword>
<keyword id="KW-0694">RNA-binding</keyword>
<keyword id="KW-0699">rRNA-binding</keyword>
<dbReference type="EMBL" id="CP001358">
    <property type="protein sequence ID" value="ACL48569.1"/>
    <property type="molecule type" value="Genomic_DNA"/>
</dbReference>
<dbReference type="SMR" id="B8IYH3"/>
<dbReference type="STRING" id="525146.Ddes_0661"/>
<dbReference type="KEGG" id="dds:Ddes_0661"/>
<dbReference type="eggNOG" id="COG0088">
    <property type="taxonomic scope" value="Bacteria"/>
</dbReference>
<dbReference type="HOGENOM" id="CLU_041575_5_2_7"/>
<dbReference type="GO" id="GO:1990904">
    <property type="term" value="C:ribonucleoprotein complex"/>
    <property type="evidence" value="ECO:0007669"/>
    <property type="project" value="UniProtKB-KW"/>
</dbReference>
<dbReference type="GO" id="GO:0005840">
    <property type="term" value="C:ribosome"/>
    <property type="evidence" value="ECO:0007669"/>
    <property type="project" value="UniProtKB-KW"/>
</dbReference>
<dbReference type="GO" id="GO:0019843">
    <property type="term" value="F:rRNA binding"/>
    <property type="evidence" value="ECO:0007669"/>
    <property type="project" value="UniProtKB-UniRule"/>
</dbReference>
<dbReference type="GO" id="GO:0003735">
    <property type="term" value="F:structural constituent of ribosome"/>
    <property type="evidence" value="ECO:0007669"/>
    <property type="project" value="InterPro"/>
</dbReference>
<dbReference type="GO" id="GO:0006412">
    <property type="term" value="P:translation"/>
    <property type="evidence" value="ECO:0007669"/>
    <property type="project" value="UniProtKB-UniRule"/>
</dbReference>
<dbReference type="Gene3D" id="3.40.1370.10">
    <property type="match status" value="1"/>
</dbReference>
<dbReference type="HAMAP" id="MF_01328_B">
    <property type="entry name" value="Ribosomal_uL4_B"/>
    <property type="match status" value="1"/>
</dbReference>
<dbReference type="InterPro" id="IPR002136">
    <property type="entry name" value="Ribosomal_uL4"/>
</dbReference>
<dbReference type="InterPro" id="IPR013005">
    <property type="entry name" value="Ribosomal_uL4-like"/>
</dbReference>
<dbReference type="InterPro" id="IPR023574">
    <property type="entry name" value="Ribosomal_uL4_dom_sf"/>
</dbReference>
<dbReference type="NCBIfam" id="TIGR03953">
    <property type="entry name" value="rplD_bact"/>
    <property type="match status" value="1"/>
</dbReference>
<dbReference type="PANTHER" id="PTHR10746">
    <property type="entry name" value="50S RIBOSOMAL PROTEIN L4"/>
    <property type="match status" value="1"/>
</dbReference>
<dbReference type="PANTHER" id="PTHR10746:SF6">
    <property type="entry name" value="LARGE RIBOSOMAL SUBUNIT PROTEIN UL4M"/>
    <property type="match status" value="1"/>
</dbReference>
<dbReference type="Pfam" id="PF00573">
    <property type="entry name" value="Ribosomal_L4"/>
    <property type="match status" value="1"/>
</dbReference>
<dbReference type="SUPFAM" id="SSF52166">
    <property type="entry name" value="Ribosomal protein L4"/>
    <property type="match status" value="1"/>
</dbReference>
<comment type="function">
    <text evidence="1">One of the primary rRNA binding proteins, this protein initially binds near the 5'-end of the 23S rRNA. It is important during the early stages of 50S assembly. It makes multiple contacts with different domains of the 23S rRNA in the assembled 50S subunit and ribosome.</text>
</comment>
<comment type="function">
    <text evidence="1">Forms part of the polypeptide exit tunnel.</text>
</comment>
<comment type="subunit">
    <text evidence="1">Part of the 50S ribosomal subunit.</text>
</comment>
<comment type="similarity">
    <text evidence="1">Belongs to the universal ribosomal protein uL4 family.</text>
</comment>
<organism>
    <name type="scientific">Desulfovibrio desulfuricans (strain ATCC 27774 / DSM 6949 / MB)</name>
    <dbReference type="NCBI Taxonomy" id="525146"/>
    <lineage>
        <taxon>Bacteria</taxon>
        <taxon>Pseudomonadati</taxon>
        <taxon>Thermodesulfobacteriota</taxon>
        <taxon>Desulfovibrionia</taxon>
        <taxon>Desulfovibrionales</taxon>
        <taxon>Desulfovibrionaceae</taxon>
        <taxon>Desulfovibrio</taxon>
    </lineage>
</organism>
<name>RL4_DESDA</name>